<reference key="1">
    <citation type="submission" date="2009-07" db="EMBL/GenBank/DDBJ databases">
        <title>Complete sequence of Pectobacterium carotovorum subsp. carotovorum PC1.</title>
        <authorList>
            <consortium name="US DOE Joint Genome Institute"/>
            <person name="Lucas S."/>
            <person name="Copeland A."/>
            <person name="Lapidus A."/>
            <person name="Glavina del Rio T."/>
            <person name="Tice H."/>
            <person name="Bruce D."/>
            <person name="Goodwin L."/>
            <person name="Pitluck S."/>
            <person name="Munk A.C."/>
            <person name="Brettin T."/>
            <person name="Detter J.C."/>
            <person name="Han C."/>
            <person name="Tapia R."/>
            <person name="Larimer F."/>
            <person name="Land M."/>
            <person name="Hauser L."/>
            <person name="Kyrpides N."/>
            <person name="Mikhailova N."/>
            <person name="Balakrishnan V."/>
            <person name="Glasner J."/>
            <person name="Perna N.T."/>
        </authorList>
    </citation>
    <scope>NUCLEOTIDE SEQUENCE [LARGE SCALE GENOMIC DNA]</scope>
    <source>
        <strain>PC1</strain>
    </source>
</reference>
<protein>
    <recommendedName>
        <fullName evidence="1">Phosphoenolpyruvate carboxykinase (ATP)</fullName>
        <shortName evidence="1">PCK</shortName>
        <shortName evidence="1">PEP carboxykinase</shortName>
        <shortName evidence="1">PEPCK</shortName>
        <ecNumber evidence="1">4.1.1.49</ecNumber>
    </recommendedName>
</protein>
<name>PCKA_PECCP</name>
<feature type="chain" id="PRO_1000206241" description="Phosphoenolpyruvate carboxykinase (ATP)">
    <location>
        <begin position="1"/>
        <end position="539"/>
    </location>
</feature>
<feature type="binding site" evidence="1">
    <location>
        <position position="64"/>
    </location>
    <ligand>
        <name>substrate</name>
    </ligand>
</feature>
<feature type="binding site" evidence="1">
    <location>
        <position position="206"/>
    </location>
    <ligand>
        <name>substrate</name>
    </ligand>
</feature>
<feature type="binding site" evidence="1">
    <location>
        <position position="212"/>
    </location>
    <ligand>
        <name>ATP</name>
        <dbReference type="ChEBI" id="CHEBI:30616"/>
    </ligand>
</feature>
<feature type="binding site" evidence="1">
    <location>
        <position position="212"/>
    </location>
    <ligand>
        <name>Mn(2+)</name>
        <dbReference type="ChEBI" id="CHEBI:29035"/>
    </ligand>
</feature>
<feature type="binding site" evidence="1">
    <location>
        <position position="212"/>
    </location>
    <ligand>
        <name>substrate</name>
    </ligand>
</feature>
<feature type="binding site" evidence="1">
    <location>
        <position position="231"/>
    </location>
    <ligand>
        <name>ATP</name>
        <dbReference type="ChEBI" id="CHEBI:30616"/>
    </ligand>
</feature>
<feature type="binding site" evidence="1">
    <location>
        <position position="231"/>
    </location>
    <ligand>
        <name>Mn(2+)</name>
        <dbReference type="ChEBI" id="CHEBI:29035"/>
    </ligand>
</feature>
<feature type="binding site" evidence="1">
    <location>
        <begin position="247"/>
        <end position="255"/>
    </location>
    <ligand>
        <name>ATP</name>
        <dbReference type="ChEBI" id="CHEBI:30616"/>
    </ligand>
</feature>
<feature type="binding site" evidence="1">
    <location>
        <position position="268"/>
    </location>
    <ligand>
        <name>Mn(2+)</name>
        <dbReference type="ChEBI" id="CHEBI:29035"/>
    </ligand>
</feature>
<feature type="binding site" evidence="1">
    <location>
        <position position="296"/>
    </location>
    <ligand>
        <name>ATP</name>
        <dbReference type="ChEBI" id="CHEBI:30616"/>
    </ligand>
</feature>
<feature type="binding site" evidence="1">
    <location>
        <position position="332"/>
    </location>
    <ligand>
        <name>ATP</name>
        <dbReference type="ChEBI" id="CHEBI:30616"/>
    </ligand>
</feature>
<feature type="binding site" evidence="1">
    <location>
        <position position="332"/>
    </location>
    <ligand>
        <name>substrate</name>
    </ligand>
</feature>
<feature type="binding site" evidence="1">
    <location>
        <begin position="448"/>
        <end position="449"/>
    </location>
    <ligand>
        <name>ATP</name>
        <dbReference type="ChEBI" id="CHEBI:30616"/>
    </ligand>
</feature>
<feature type="binding site" evidence="1">
    <location>
        <position position="454"/>
    </location>
    <ligand>
        <name>ATP</name>
        <dbReference type="ChEBI" id="CHEBI:30616"/>
    </ligand>
</feature>
<gene>
    <name evidence="1" type="primary">pckA</name>
    <name type="ordered locus">PC1_3896</name>
</gene>
<organism>
    <name type="scientific">Pectobacterium carotovorum subsp. carotovorum (strain PC1)</name>
    <dbReference type="NCBI Taxonomy" id="561230"/>
    <lineage>
        <taxon>Bacteria</taxon>
        <taxon>Pseudomonadati</taxon>
        <taxon>Pseudomonadota</taxon>
        <taxon>Gammaproteobacteria</taxon>
        <taxon>Enterobacterales</taxon>
        <taxon>Pectobacteriaceae</taxon>
        <taxon>Pectobacterium</taxon>
    </lineage>
</organism>
<dbReference type="EC" id="4.1.1.49" evidence="1"/>
<dbReference type="EMBL" id="CP001657">
    <property type="protein sequence ID" value="ACT14911.1"/>
    <property type="molecule type" value="Genomic_DNA"/>
</dbReference>
<dbReference type="RefSeq" id="WP_015841994.1">
    <property type="nucleotide sequence ID" value="NC_012917.1"/>
</dbReference>
<dbReference type="SMR" id="C6DGE8"/>
<dbReference type="STRING" id="561230.PC1_3896"/>
<dbReference type="GeneID" id="67792208"/>
<dbReference type="KEGG" id="pct:PC1_3896"/>
<dbReference type="eggNOG" id="COG1866">
    <property type="taxonomic scope" value="Bacteria"/>
</dbReference>
<dbReference type="HOGENOM" id="CLU_018247_0_1_6"/>
<dbReference type="OrthoDB" id="9806325at2"/>
<dbReference type="UniPathway" id="UPA00138"/>
<dbReference type="Proteomes" id="UP000002736">
    <property type="component" value="Chromosome"/>
</dbReference>
<dbReference type="GO" id="GO:0005829">
    <property type="term" value="C:cytosol"/>
    <property type="evidence" value="ECO:0007669"/>
    <property type="project" value="TreeGrafter"/>
</dbReference>
<dbReference type="GO" id="GO:0005524">
    <property type="term" value="F:ATP binding"/>
    <property type="evidence" value="ECO:0007669"/>
    <property type="project" value="UniProtKB-UniRule"/>
</dbReference>
<dbReference type="GO" id="GO:0046872">
    <property type="term" value="F:metal ion binding"/>
    <property type="evidence" value="ECO:0007669"/>
    <property type="project" value="UniProtKB-KW"/>
</dbReference>
<dbReference type="GO" id="GO:0004612">
    <property type="term" value="F:phosphoenolpyruvate carboxykinase (ATP) activity"/>
    <property type="evidence" value="ECO:0007669"/>
    <property type="project" value="UniProtKB-UniRule"/>
</dbReference>
<dbReference type="GO" id="GO:0006094">
    <property type="term" value="P:gluconeogenesis"/>
    <property type="evidence" value="ECO:0007669"/>
    <property type="project" value="UniProtKB-UniRule"/>
</dbReference>
<dbReference type="CDD" id="cd00484">
    <property type="entry name" value="PEPCK_ATP"/>
    <property type="match status" value="1"/>
</dbReference>
<dbReference type="FunFam" id="2.170.8.10:FF:000001">
    <property type="entry name" value="Phosphoenolpyruvate carboxykinase (ATP)"/>
    <property type="match status" value="1"/>
</dbReference>
<dbReference type="FunFam" id="3.40.449.10:FF:000001">
    <property type="entry name" value="Phosphoenolpyruvate carboxykinase (ATP)"/>
    <property type="match status" value="1"/>
</dbReference>
<dbReference type="Gene3D" id="3.90.228.20">
    <property type="match status" value="1"/>
</dbReference>
<dbReference type="Gene3D" id="3.40.449.10">
    <property type="entry name" value="Phosphoenolpyruvate Carboxykinase, domain 1"/>
    <property type="match status" value="1"/>
</dbReference>
<dbReference type="Gene3D" id="2.170.8.10">
    <property type="entry name" value="Phosphoenolpyruvate Carboxykinase, domain 2"/>
    <property type="match status" value="1"/>
</dbReference>
<dbReference type="HAMAP" id="MF_00453">
    <property type="entry name" value="PEPCK_ATP"/>
    <property type="match status" value="1"/>
</dbReference>
<dbReference type="InterPro" id="IPR001272">
    <property type="entry name" value="PEP_carboxykinase_ATP"/>
</dbReference>
<dbReference type="InterPro" id="IPR013035">
    <property type="entry name" value="PEP_carboxykinase_C"/>
</dbReference>
<dbReference type="InterPro" id="IPR008210">
    <property type="entry name" value="PEP_carboxykinase_N"/>
</dbReference>
<dbReference type="InterPro" id="IPR015994">
    <property type="entry name" value="PEPCK_ATP_CS"/>
</dbReference>
<dbReference type="NCBIfam" id="TIGR00224">
    <property type="entry name" value="pckA"/>
    <property type="match status" value="1"/>
</dbReference>
<dbReference type="NCBIfam" id="NF006819">
    <property type="entry name" value="PRK09344.1-1"/>
    <property type="match status" value="1"/>
</dbReference>
<dbReference type="NCBIfam" id="NF006820">
    <property type="entry name" value="PRK09344.1-2"/>
    <property type="match status" value="1"/>
</dbReference>
<dbReference type="NCBIfam" id="NF006821">
    <property type="entry name" value="PRK09344.1-3"/>
    <property type="match status" value="1"/>
</dbReference>
<dbReference type="PANTHER" id="PTHR30031:SF0">
    <property type="entry name" value="PHOSPHOENOLPYRUVATE CARBOXYKINASE (ATP)"/>
    <property type="match status" value="1"/>
</dbReference>
<dbReference type="PANTHER" id="PTHR30031">
    <property type="entry name" value="PHOSPHOENOLPYRUVATE CARBOXYKINASE ATP"/>
    <property type="match status" value="1"/>
</dbReference>
<dbReference type="Pfam" id="PF01293">
    <property type="entry name" value="PEPCK_ATP"/>
    <property type="match status" value="1"/>
</dbReference>
<dbReference type="PIRSF" id="PIRSF006294">
    <property type="entry name" value="PEP_crbxkin"/>
    <property type="match status" value="1"/>
</dbReference>
<dbReference type="SUPFAM" id="SSF68923">
    <property type="entry name" value="PEP carboxykinase N-terminal domain"/>
    <property type="match status" value="1"/>
</dbReference>
<dbReference type="SUPFAM" id="SSF53795">
    <property type="entry name" value="PEP carboxykinase-like"/>
    <property type="match status" value="1"/>
</dbReference>
<dbReference type="PROSITE" id="PS00532">
    <property type="entry name" value="PEPCK_ATP"/>
    <property type="match status" value="1"/>
</dbReference>
<proteinExistence type="inferred from homology"/>
<evidence type="ECO:0000255" key="1">
    <source>
        <dbReference type="HAMAP-Rule" id="MF_00453"/>
    </source>
</evidence>
<sequence length="539" mass="59412">MQINGITPQALTAYGIHDVRDIVYNPSYELLFEEERSPTLQGYERGIETQLGAVAVDTGIFTGRSPKDKYIVRDDVTRDTVWWSDQGKGKNDNHPLSQETWTHLKQLVTTQLSGKRLFIIDAFCGANPDSRLSVRFVTEVAWQAHFVKNMFIRPSDEELEGFEPDFIVMNGAKCTNPNWQEQGLNSENFVAFNLTERIQLIGGTWYGGEMKKGMFSIMNYLLPLKGIASMHCSANVGEKGDVAVFFGLSGTGKTTLSTDPKRQLIGDDEHGWDDDGVFNFEGGCYAKTIKLSKEAEPDIYGAIKRDALLENVTVLADGTVDFNDGSKTENTRVSYPIYHIQNIVKPVSKAGHATKVIFLTADAFGVLPPVSRLTSDQTQYHFLSGFTAKLAGTERGVTEPTPTFSACFGAAFLMLHPTQYAEVLVKRMKAAGAQAYLVNTGWNGSGKRISIKDTRGIIDAILNGSIDDAEMQTLPVFDLAIPTSLPGVNPDILDPRDTYASVEQWQEKADDLAQRFITNFDKYTDAPAGAALVKAGPKR</sequence>
<comment type="function">
    <text evidence="1">Involved in the gluconeogenesis. Catalyzes the conversion of oxaloacetate (OAA) to phosphoenolpyruvate (PEP) through direct phosphoryl transfer between the nucleoside triphosphate and OAA.</text>
</comment>
<comment type="catalytic activity">
    <reaction evidence="1">
        <text>oxaloacetate + ATP = phosphoenolpyruvate + ADP + CO2</text>
        <dbReference type="Rhea" id="RHEA:18617"/>
        <dbReference type="ChEBI" id="CHEBI:16452"/>
        <dbReference type="ChEBI" id="CHEBI:16526"/>
        <dbReference type="ChEBI" id="CHEBI:30616"/>
        <dbReference type="ChEBI" id="CHEBI:58702"/>
        <dbReference type="ChEBI" id="CHEBI:456216"/>
        <dbReference type="EC" id="4.1.1.49"/>
    </reaction>
</comment>
<comment type="cofactor">
    <cofactor evidence="1">
        <name>Mn(2+)</name>
        <dbReference type="ChEBI" id="CHEBI:29035"/>
    </cofactor>
    <text evidence="1">Binds 1 Mn(2+) ion per subunit.</text>
</comment>
<comment type="pathway">
    <text evidence="1">Carbohydrate biosynthesis; gluconeogenesis.</text>
</comment>
<comment type="subunit">
    <text evidence="1">Monomer.</text>
</comment>
<comment type="subcellular location">
    <subcellularLocation>
        <location evidence="1">Cytoplasm</location>
    </subcellularLocation>
</comment>
<comment type="similarity">
    <text evidence="1">Belongs to the phosphoenolpyruvate carboxykinase (ATP) family.</text>
</comment>
<keyword id="KW-0067">ATP-binding</keyword>
<keyword id="KW-0963">Cytoplasm</keyword>
<keyword id="KW-0210">Decarboxylase</keyword>
<keyword id="KW-0312">Gluconeogenesis</keyword>
<keyword id="KW-0456">Lyase</keyword>
<keyword id="KW-0464">Manganese</keyword>
<keyword id="KW-0479">Metal-binding</keyword>
<keyword id="KW-0547">Nucleotide-binding</keyword>
<accession>C6DGE8</accession>